<organism>
    <name type="scientific">Staphylococcus aureus (strain NCTC 8325 / PS 47)</name>
    <dbReference type="NCBI Taxonomy" id="93061"/>
    <lineage>
        <taxon>Bacteria</taxon>
        <taxon>Bacillati</taxon>
        <taxon>Bacillota</taxon>
        <taxon>Bacilli</taxon>
        <taxon>Bacillales</taxon>
        <taxon>Staphylococcaceae</taxon>
        <taxon>Staphylococcus</taxon>
    </lineage>
</organism>
<evidence type="ECO:0000250" key="1">
    <source>
        <dbReference type="UniProtKB" id="P25052"/>
    </source>
</evidence>
<evidence type="ECO:0000250" key="2">
    <source>
        <dbReference type="UniProtKB" id="Q6GEY1"/>
    </source>
</evidence>
<evidence type="ECO:0000305" key="3"/>
<feature type="chain" id="PRO_0000293612" description="Aminopyrimidine aminohydrolase">
    <location>
        <begin position="1"/>
        <end position="229"/>
    </location>
</feature>
<feature type="active site" description="Nucleophile" evidence="1">
    <location>
        <position position="137"/>
    </location>
</feature>
<feature type="active site" description="Proton donor" evidence="1">
    <location>
        <position position="208"/>
    </location>
</feature>
<feature type="binding site" evidence="1">
    <location>
        <position position="44"/>
    </location>
    <ligand>
        <name>substrate</name>
    </ligand>
</feature>
<feature type="binding site" evidence="1">
    <location>
        <position position="141"/>
    </location>
    <ligand>
        <name>substrate</name>
    </ligand>
</feature>
<feature type="binding site" evidence="1">
    <location>
        <position position="167"/>
    </location>
    <ligand>
        <name>substrate</name>
    </ligand>
</feature>
<feature type="site" description="Increases nucleophilicity of active site Cys" evidence="1">
    <location>
        <position position="47"/>
    </location>
</feature>
<proteinExistence type="inferred from homology"/>
<name>TENA_STAA8</name>
<comment type="function">
    <text evidence="1 2">Catalyzes an amino-pyrimidine hydrolysis reaction at the C5' of the pyrimidine moiety of thiamine compounds, a reaction that is part of a thiamine salvage pathway. Thus, catalyzes the conversion of 4-amino-5-aminomethyl-2-methylpyrimidine to 4-amino-5-hydroxymethyl-2-methylpyrimidine (HMP). Is also able to catalyze the hydrolytic cleavage of thiamine; however, this thiaminase activity may not be physiologically relevant. Therefore, is probably involved in the regeneration of the thiamine pyrimidine from thiamine degraded products present in the environment, rather than in thiamine degradation.</text>
</comment>
<comment type="catalytic activity">
    <reaction evidence="1">
        <text>4-amino-5-aminomethyl-2-methylpyrimidine + H2O = 4-amino-5-hydroxymethyl-2-methylpyrimidine + NH4(+)</text>
        <dbReference type="Rhea" id="RHEA:31799"/>
        <dbReference type="ChEBI" id="CHEBI:15377"/>
        <dbReference type="ChEBI" id="CHEBI:16892"/>
        <dbReference type="ChEBI" id="CHEBI:28938"/>
        <dbReference type="ChEBI" id="CHEBI:63416"/>
        <dbReference type="EC" id="3.5.99.2"/>
    </reaction>
</comment>
<comment type="catalytic activity">
    <reaction evidence="2">
        <text>thiamine + H2O = 5-(2-hydroxyethyl)-4-methylthiazole + 4-amino-5-hydroxymethyl-2-methylpyrimidine + H(+)</text>
        <dbReference type="Rhea" id="RHEA:17509"/>
        <dbReference type="ChEBI" id="CHEBI:15377"/>
        <dbReference type="ChEBI" id="CHEBI:15378"/>
        <dbReference type="ChEBI" id="CHEBI:16892"/>
        <dbReference type="ChEBI" id="CHEBI:17957"/>
        <dbReference type="ChEBI" id="CHEBI:18385"/>
        <dbReference type="EC" id="3.5.99.2"/>
    </reaction>
</comment>
<comment type="pathway">
    <text evidence="1">Cofactor biosynthesis; thiamine diphosphate biosynthesis.</text>
</comment>
<comment type="subunit">
    <text evidence="2">Homotetramer.</text>
</comment>
<comment type="similarity">
    <text evidence="3">Belongs to the TenA family.</text>
</comment>
<gene>
    <name type="primary">tenA</name>
    <name type="ordered locus">SAOUHSC_02331</name>
</gene>
<sequence length="229" mass="26729">MEFSQKLYQAAKPIINDIYEDDFIQKMLSGDIGADALRHYLKADAAYLKEFTNLYALLIPKMNSMNDVKFLVEQIEFMVEGEVLAHDILAQIVGESYEEIIKTKVWPPSGDHYIKHMYFQAHSRENAIYTIAAMAPCPYIYAELAKRSQSDHKLNREKDTAKWFDFYSTEMDDIINVFEAIMNKLAESMSDKELEQVKQVFLESCIHERRFFNMAMTLEQWEFGGKVND</sequence>
<reference key="1">
    <citation type="book" date="2006" name="Gram positive pathogens, 2nd edition">
        <title>The Staphylococcus aureus NCTC 8325 genome.</title>
        <editorList>
            <person name="Fischetti V."/>
            <person name="Novick R."/>
            <person name="Ferretti J."/>
            <person name="Portnoy D."/>
            <person name="Rood J."/>
        </editorList>
        <authorList>
            <person name="Gillaspy A.F."/>
            <person name="Worrell V."/>
            <person name="Orvis J."/>
            <person name="Roe B.A."/>
            <person name="Dyer D.W."/>
            <person name="Iandolo J.J."/>
        </authorList>
    </citation>
    <scope>NUCLEOTIDE SEQUENCE [LARGE SCALE GENOMIC DNA]</scope>
    <source>
        <strain>NCTC 8325 / PS 47</strain>
    </source>
</reference>
<protein>
    <recommendedName>
        <fullName evidence="1">Aminopyrimidine aminohydrolase</fullName>
        <ecNumber evidence="2">3.5.99.2</ecNumber>
    </recommendedName>
    <alternativeName>
        <fullName evidence="2">Thiaminase II</fullName>
    </alternativeName>
</protein>
<keyword id="KW-0378">Hydrolase</keyword>
<keyword id="KW-1185">Reference proteome</keyword>
<keyword id="KW-0784">Thiamine biosynthesis</keyword>
<dbReference type="EC" id="3.5.99.2" evidence="2"/>
<dbReference type="EMBL" id="CP000253">
    <property type="protein sequence ID" value="ABD31365.1"/>
    <property type="molecule type" value="Genomic_DNA"/>
</dbReference>
<dbReference type="RefSeq" id="WP_000396076.1">
    <property type="nucleotide sequence ID" value="NZ_LS483365.1"/>
</dbReference>
<dbReference type="RefSeq" id="YP_500810.1">
    <property type="nucleotide sequence ID" value="NC_007795.1"/>
</dbReference>
<dbReference type="SMR" id="Q2FWG0"/>
<dbReference type="STRING" id="93061.SAOUHSC_02331"/>
<dbReference type="PaxDb" id="1280-SAXN108_2339"/>
<dbReference type="GeneID" id="3920956"/>
<dbReference type="KEGG" id="sao:SAOUHSC_02331"/>
<dbReference type="PATRIC" id="fig|93061.5.peg.2112"/>
<dbReference type="eggNOG" id="COG0819">
    <property type="taxonomic scope" value="Bacteria"/>
</dbReference>
<dbReference type="HOGENOM" id="CLU_077537_3_1_9"/>
<dbReference type="OrthoDB" id="34166at2"/>
<dbReference type="UniPathway" id="UPA00060"/>
<dbReference type="Proteomes" id="UP000008816">
    <property type="component" value="Chromosome"/>
</dbReference>
<dbReference type="GO" id="GO:0005829">
    <property type="term" value="C:cytosol"/>
    <property type="evidence" value="ECO:0000318"/>
    <property type="project" value="GO_Central"/>
</dbReference>
<dbReference type="GO" id="GO:0050334">
    <property type="term" value="F:thiaminase activity"/>
    <property type="evidence" value="ECO:0007669"/>
    <property type="project" value="UniProtKB-EC"/>
</dbReference>
<dbReference type="GO" id="GO:0009228">
    <property type="term" value="P:thiamine biosynthetic process"/>
    <property type="evidence" value="ECO:0007669"/>
    <property type="project" value="UniProtKB-KW"/>
</dbReference>
<dbReference type="GO" id="GO:0009229">
    <property type="term" value="P:thiamine diphosphate biosynthetic process"/>
    <property type="evidence" value="ECO:0007669"/>
    <property type="project" value="UniProtKB-UniPathway"/>
</dbReference>
<dbReference type="CDD" id="cd19360">
    <property type="entry name" value="TenA_C_SaTenA-like"/>
    <property type="match status" value="1"/>
</dbReference>
<dbReference type="FunFam" id="1.20.910.10:FF:000010">
    <property type="entry name" value="Aminopyrimidine aminohydrolase"/>
    <property type="match status" value="1"/>
</dbReference>
<dbReference type="Gene3D" id="1.20.910.10">
    <property type="entry name" value="Heme oxygenase-like"/>
    <property type="match status" value="1"/>
</dbReference>
<dbReference type="InterPro" id="IPR016084">
    <property type="entry name" value="Haem_Oase-like_multi-hlx"/>
</dbReference>
<dbReference type="InterPro" id="IPR004305">
    <property type="entry name" value="Thiaminase-2/PQQC"/>
</dbReference>
<dbReference type="InterPro" id="IPR027574">
    <property type="entry name" value="Thiaminase_II"/>
</dbReference>
<dbReference type="InterPro" id="IPR050967">
    <property type="entry name" value="Thiamine_Salvage_TenA"/>
</dbReference>
<dbReference type="NCBIfam" id="TIGR04306">
    <property type="entry name" value="salvage_TenA"/>
    <property type="match status" value="1"/>
</dbReference>
<dbReference type="PANTHER" id="PTHR43198">
    <property type="entry name" value="BIFUNCTIONAL TH2 PROTEIN"/>
    <property type="match status" value="1"/>
</dbReference>
<dbReference type="PANTHER" id="PTHR43198:SF2">
    <property type="entry name" value="SI:CH1073-67J19.1-RELATED"/>
    <property type="match status" value="1"/>
</dbReference>
<dbReference type="Pfam" id="PF03070">
    <property type="entry name" value="TENA_THI-4"/>
    <property type="match status" value="1"/>
</dbReference>
<dbReference type="SUPFAM" id="SSF48613">
    <property type="entry name" value="Heme oxygenase-like"/>
    <property type="match status" value="1"/>
</dbReference>
<accession>Q2FWG0</accession>